<organism>
    <name type="scientific">Aspergillus clavatus (strain ATCC 1007 / CBS 513.65 / DSM 816 / NCTC 3887 / NRRL 1 / QM 1276 / 107)</name>
    <dbReference type="NCBI Taxonomy" id="344612"/>
    <lineage>
        <taxon>Eukaryota</taxon>
        <taxon>Fungi</taxon>
        <taxon>Dikarya</taxon>
        <taxon>Ascomycota</taxon>
        <taxon>Pezizomycotina</taxon>
        <taxon>Eurotiomycetes</taxon>
        <taxon>Eurotiomycetidae</taxon>
        <taxon>Eurotiales</taxon>
        <taxon>Aspergillaceae</taxon>
        <taxon>Aspergillus</taxon>
        <taxon>Aspergillus subgen. Fumigati</taxon>
    </lineage>
</organism>
<gene>
    <name type="primary">acrB</name>
    <name type="synonym">acr2</name>
    <name type="ORF">ACLA_051770</name>
</gene>
<reference key="1">
    <citation type="journal article" date="2008" name="PLoS Genet.">
        <title>Genomic islands in the pathogenic filamentous fungus Aspergillus fumigatus.</title>
        <authorList>
            <person name="Fedorova N.D."/>
            <person name="Khaldi N."/>
            <person name="Joardar V.S."/>
            <person name="Maiti R."/>
            <person name="Amedeo P."/>
            <person name="Anderson M.J."/>
            <person name="Crabtree J."/>
            <person name="Silva J.C."/>
            <person name="Badger J.H."/>
            <person name="Albarraq A."/>
            <person name="Angiuoli S."/>
            <person name="Bussey H."/>
            <person name="Bowyer P."/>
            <person name="Cotty P.J."/>
            <person name="Dyer P.S."/>
            <person name="Egan A."/>
            <person name="Galens K."/>
            <person name="Fraser-Liggett C.M."/>
            <person name="Haas B.J."/>
            <person name="Inman J.M."/>
            <person name="Kent R."/>
            <person name="Lemieux S."/>
            <person name="Malavazi I."/>
            <person name="Orvis J."/>
            <person name="Roemer T."/>
            <person name="Ronning C.M."/>
            <person name="Sundaram J.P."/>
            <person name="Sutton G."/>
            <person name="Turner G."/>
            <person name="Venter J.C."/>
            <person name="White O.R."/>
            <person name="Whitty B.R."/>
            <person name="Youngman P."/>
            <person name="Wolfe K.H."/>
            <person name="Goldman G.H."/>
            <person name="Wortman J.R."/>
            <person name="Jiang B."/>
            <person name="Denning D.W."/>
            <person name="Nierman W.C."/>
        </authorList>
    </citation>
    <scope>NUCLEOTIDE SEQUENCE [LARGE SCALE GENOMIC DNA]</scope>
    <source>
        <strain>ATCC 1007 / CBS 513.65 / DSM 816 / NCTC 3887 / NRRL 1 / QM 1276 / 107</strain>
    </source>
</reference>
<dbReference type="EMBL" id="DS027054">
    <property type="protein sequence ID" value="EAW10705.1"/>
    <property type="molecule type" value="Genomic_DNA"/>
</dbReference>
<dbReference type="RefSeq" id="XP_001272131.1">
    <property type="nucleotide sequence ID" value="XM_001272130.1"/>
</dbReference>
<dbReference type="SMR" id="A1CIK0"/>
<dbReference type="STRING" id="344612.A1CIK0"/>
<dbReference type="EnsemblFungi" id="EAW10705">
    <property type="protein sequence ID" value="EAW10705"/>
    <property type="gene ID" value="ACLA_051770"/>
</dbReference>
<dbReference type="GeneID" id="4703619"/>
<dbReference type="KEGG" id="act:ACLA_051770"/>
<dbReference type="VEuPathDB" id="FungiDB:ACLA_051770"/>
<dbReference type="eggNOG" id="ENOG502QSPS">
    <property type="taxonomic scope" value="Eukaryota"/>
</dbReference>
<dbReference type="HOGENOM" id="CLU_005822_0_0_1"/>
<dbReference type="OMA" id="NNAFWQP"/>
<dbReference type="OrthoDB" id="4158994at2759"/>
<dbReference type="Proteomes" id="UP000006701">
    <property type="component" value="Unassembled WGS sequence"/>
</dbReference>
<dbReference type="GO" id="GO:0016020">
    <property type="term" value="C:membrane"/>
    <property type="evidence" value="ECO:0007669"/>
    <property type="project" value="UniProtKB-SubCell"/>
</dbReference>
<dbReference type="PROSITE" id="PS00589">
    <property type="entry name" value="PTS_HPR_SER"/>
    <property type="match status" value="1"/>
</dbReference>
<evidence type="ECO:0000250" key="1"/>
<evidence type="ECO:0000255" key="2"/>
<evidence type="ECO:0000256" key="3">
    <source>
        <dbReference type="SAM" id="MobiDB-lite"/>
    </source>
</evidence>
<evidence type="ECO:0000305" key="4"/>
<proteinExistence type="inferred from homology"/>
<keyword id="KW-0175">Coiled coil</keyword>
<keyword id="KW-0472">Membrane</keyword>
<keyword id="KW-1185">Reference proteome</keyword>
<keyword id="KW-0812">Transmembrane</keyword>
<keyword id="KW-1133">Transmembrane helix</keyword>
<keyword id="KW-0833">Ubl conjugation pathway</keyword>
<protein>
    <recommendedName>
        <fullName>Probable ubiquitination network signaling protein acrB</fullName>
    </recommendedName>
    <alternativeName>
        <fullName>Acriflavine resistance protein B</fullName>
    </alternativeName>
</protein>
<accession>A1CIK0</accession>
<sequence length="1018" mass="109618">MPRSSATARKNQSNRNENGASSGKKVAKQKSNGHLNGSLNGGSTPGSVSSSQVDLPSSRSTSDSAIAPAAAASSNLNGISDSSKEDCNGREKLNGYTKGNADMSYVQTNGAGSQNGGDHAGQASHRTDKSATGAKRSTSNASINPLQLASTILKSCPMYDTIAILIFLLQLPPMVLTLVQFLFASLTFMPPSGASAGSLSSNFDIFQGPAGTPSLSTMIAMDGFCLLIWALLMWTWAQNFALDLAHVQVAITLGGGGSGKNGGVNTLCVGIVLILHLIRSKGIQDFVIGHLLSSNIISPDLLAQYSHLLPTEFRRTESQTSPSWIRSLLAVHILAQAGTAMARRSMAKNRSPNPPRPGKRVDTEASAGSQTQIDSAFESGASVSSYLGPDGQLITPTAHKDGRDRLLSAKKRRRQANQVRSRQPFWAALASTKVTVMREYEHSRALSKTARGLPMTENDLQGVSFDDGLVWITDVDASTIKFAAGDFASADDSGLSGACEDGRLGNEEIEPFYVCVNGALWATATISRVPDAQKGSGMVHWRGEVSGLAPNCAYTCSFMRSDTDEEICAISVKTPVTNDTEQFSLVSPPPQPSYRPSSPTTTLKNSIVNAEAKLNEKRSRLRKAKNDHKLIISKIRKELDNYNHRLHSGTDENRQKQRSLQLERNIRQTEEATALLEGQLDSLENIPEEELREWSDQKAKYDQELQLLNSAKEELVSARSAVAREVSSLESDLGSTVQRRERLQSRRTRVNEQYERIVSANAQGLNERERRAAEQFAREQDQAKLEANFNEQFGSIGQSVQEYQLRAQQIWQQCDAIEQAIQQQQQRMLLDSAPLTPEGNLPGTNPFSETSALPLGALTSTAPNSRSLLGLSFPAIKSSPLQTISSALDASSSHPTSPVQPPSFLNFPASPLVNATSHLDSDFTYRDRSFSNRSARSSLYGSEFLDSSRRQPFQIDLPELLGEKRNSGSDSTALKSGLRPVSSPFQRAGSRGSGSGSNGSGGSGSGSGSPSSAYGKPN</sequence>
<comment type="function">
    <text evidence="1">Component of the regulatory network controlling carbon source utilization through ubiquitination and deubiquitination involving creA, creB, creC, creD and acrB. Involved in resistance to acriflavine, and required for normal growth on a range of sole carbon sources, including fructose, cellobiose, raffinose, and starch, and reduced utilization of amino acids, including GABA and beta-alanine, as sole carbon and nitrogen sources (By similarity).</text>
</comment>
<comment type="subcellular location">
    <subcellularLocation>
        <location evidence="4">Membrane</location>
        <topology evidence="4">Multi-pass membrane protein</topology>
    </subcellularLocation>
</comment>
<comment type="similarity">
    <text evidence="4">Belongs to the acrB family.</text>
</comment>
<name>ACRB_ASPCL</name>
<feature type="chain" id="PRO_0000395726" description="Probable ubiquitination network signaling protein acrB">
    <location>
        <begin position="1"/>
        <end position="1018"/>
    </location>
</feature>
<feature type="transmembrane region" description="Helical" evidence="2">
    <location>
        <begin position="162"/>
        <end position="182"/>
    </location>
</feature>
<feature type="transmembrane region" description="Helical" evidence="2">
    <location>
        <begin position="217"/>
        <end position="237"/>
    </location>
</feature>
<feature type="transmembrane region" description="Helical" evidence="2">
    <location>
        <begin position="258"/>
        <end position="278"/>
    </location>
</feature>
<feature type="region of interest" description="Disordered" evidence="3">
    <location>
        <begin position="1"/>
        <end position="138"/>
    </location>
</feature>
<feature type="region of interest" description="Disordered" evidence="3">
    <location>
        <begin position="342"/>
        <end position="371"/>
    </location>
</feature>
<feature type="region of interest" description="Disordered" evidence="3">
    <location>
        <begin position="581"/>
        <end position="602"/>
    </location>
</feature>
<feature type="region of interest" description="Disordered" evidence="3">
    <location>
        <begin position="962"/>
        <end position="1018"/>
    </location>
</feature>
<feature type="coiled-coil region" evidence="2">
    <location>
        <begin position="601"/>
        <end position="788"/>
    </location>
</feature>
<feature type="compositionally biased region" description="Polar residues" evidence="3">
    <location>
        <begin position="1"/>
        <end position="21"/>
    </location>
</feature>
<feature type="compositionally biased region" description="Low complexity" evidence="3">
    <location>
        <begin position="45"/>
        <end position="74"/>
    </location>
</feature>
<feature type="compositionally biased region" description="Basic and acidic residues" evidence="3">
    <location>
        <begin position="82"/>
        <end position="93"/>
    </location>
</feature>
<feature type="compositionally biased region" description="Gly residues" evidence="3">
    <location>
        <begin position="991"/>
        <end position="1007"/>
    </location>
</feature>